<reference key="1">
    <citation type="journal article" date="1995" name="Proc. Natl. Acad. Sci. U.S.A.">
        <title>ndhF sequence evolution and the major clades in the sunflower family.</title>
        <authorList>
            <person name="Kim K.-J."/>
            <person name="Jansen R.K."/>
        </authorList>
    </citation>
    <scope>NUCLEOTIDE SEQUENCE [GENOMIC DNA]</scope>
</reference>
<organism>
    <name type="scientific">Dampiera diversifolia</name>
    <name type="common">Blue dampiera</name>
    <dbReference type="NCBI Taxonomy" id="41565"/>
    <lineage>
        <taxon>Eukaryota</taxon>
        <taxon>Viridiplantae</taxon>
        <taxon>Streptophyta</taxon>
        <taxon>Embryophyta</taxon>
        <taxon>Tracheophyta</taxon>
        <taxon>Spermatophyta</taxon>
        <taxon>Magnoliopsida</taxon>
        <taxon>eudicotyledons</taxon>
        <taxon>Gunneridae</taxon>
        <taxon>Pentapetalae</taxon>
        <taxon>asterids</taxon>
        <taxon>campanulids</taxon>
        <taxon>Asterales</taxon>
        <taxon>Goodeniaceae</taxon>
        <taxon>core Goodeniaceae</taxon>
        <taxon>LAD clade</taxon>
        <taxon>Dampiera</taxon>
    </lineage>
</organism>
<proteinExistence type="inferred from homology"/>
<evidence type="ECO:0000250" key="1"/>
<evidence type="ECO:0000255" key="2"/>
<evidence type="ECO:0000305" key="3"/>
<accession>Q32126</accession>
<name>NU5C_DAMDI</name>
<feature type="chain" id="PRO_0000118181" description="NAD(P)H-quinone oxidoreductase subunit 5, chloroplastic">
    <location>
        <begin position="1"/>
        <end position="744"/>
    </location>
</feature>
<feature type="transmembrane region" description="Helical" evidence="2">
    <location>
        <begin position="9"/>
        <end position="29"/>
    </location>
</feature>
<feature type="transmembrane region" description="Helical" evidence="2">
    <location>
        <begin position="40"/>
        <end position="60"/>
    </location>
</feature>
<feature type="transmembrane region" description="Helical" evidence="2">
    <location>
        <begin position="88"/>
        <end position="108"/>
    </location>
</feature>
<feature type="transmembrane region" description="Helical" evidence="2">
    <location>
        <begin position="125"/>
        <end position="145"/>
    </location>
</feature>
<feature type="transmembrane region" description="Helical" evidence="2">
    <location>
        <begin position="147"/>
        <end position="167"/>
    </location>
</feature>
<feature type="transmembrane region" description="Helical" evidence="2">
    <location>
        <begin position="185"/>
        <end position="205"/>
    </location>
</feature>
<feature type="transmembrane region" description="Helical" evidence="2">
    <location>
        <begin position="219"/>
        <end position="239"/>
    </location>
</feature>
<feature type="transmembrane region" description="Helical" evidence="2">
    <location>
        <begin position="258"/>
        <end position="278"/>
    </location>
</feature>
<feature type="transmembrane region" description="Helical" evidence="2">
    <location>
        <begin position="290"/>
        <end position="312"/>
    </location>
</feature>
<feature type="transmembrane region" description="Helical" evidence="2">
    <location>
        <begin position="327"/>
        <end position="347"/>
    </location>
</feature>
<feature type="transmembrane region" description="Helical" evidence="2">
    <location>
        <begin position="354"/>
        <end position="374"/>
    </location>
</feature>
<feature type="transmembrane region" description="Helical" evidence="2">
    <location>
        <begin position="396"/>
        <end position="416"/>
    </location>
</feature>
<feature type="transmembrane region" description="Helical" evidence="2">
    <location>
        <begin position="425"/>
        <end position="445"/>
    </location>
</feature>
<feature type="transmembrane region" description="Helical" evidence="2">
    <location>
        <begin position="548"/>
        <end position="568"/>
    </location>
</feature>
<feature type="transmembrane region" description="Helical" evidence="2">
    <location>
        <begin position="608"/>
        <end position="628"/>
    </location>
</feature>
<feature type="transmembrane region" description="Helical" evidence="2">
    <location>
        <begin position="724"/>
        <end position="744"/>
    </location>
</feature>
<protein>
    <recommendedName>
        <fullName>NAD(P)H-quinone oxidoreductase subunit 5, chloroplastic</fullName>
        <ecNumber>7.1.1.-</ecNumber>
    </recommendedName>
    <alternativeName>
        <fullName>NAD(P)H dehydrogenase subunit 5</fullName>
    </alternativeName>
    <alternativeName>
        <fullName>NADH-plastoquinone oxidoreductase subunit 5</fullName>
    </alternativeName>
</protein>
<keyword id="KW-0150">Chloroplast</keyword>
<keyword id="KW-0472">Membrane</keyword>
<keyword id="KW-0520">NAD</keyword>
<keyword id="KW-0521">NADP</keyword>
<keyword id="KW-0934">Plastid</keyword>
<keyword id="KW-0618">Plastoquinone</keyword>
<keyword id="KW-0874">Quinone</keyword>
<keyword id="KW-0793">Thylakoid</keyword>
<keyword id="KW-1278">Translocase</keyword>
<keyword id="KW-0812">Transmembrane</keyword>
<keyword id="KW-1133">Transmembrane helix</keyword>
<keyword id="KW-0813">Transport</keyword>
<sequence>MEQTYQYGWIIPFLPLPVPMLIGLGLLLFPTATKSLRRMWAFQSVLLLSIVMIFSMNLSIQQINSSSVYQYVWSWIINNDFSLEFGYLIDPLTSIMSILITTVGIMVLSYSDNYMSHDHGYLRFFAYMSFFSTSMLGLVTSSNLIQIYIFWELVGMCSYLLIGFWFTRPLAANACQKAFVTNRVGDFGLLLGILGIYWITGSFEFRDLFQIFNSLISNNEVNFLFVTFCALLLFTGAIAKSAQFPLHVWLPDAMEGPTPISALIHAATMVAAGIFLIARLLPLFIVIPHIMNFISLIGIITLFLGATLALAQKDIKRGLAYSTMSQLGYMVLALGMGSYRSALFHLITHAYSKALLFLGSGSVIHSMETLVGYSPQKSQNMGLMGGLTKHVPITKTAFLLGTLSLCGIPPLACFWSKDEILNDSWLYSPIFAIIAWSTAGLTAFYMCRIYLLSFEGHLNAHFQNYSGKKNTPLSSIYIWGKEASEISKKNFCELILLKMKRTECPSFFSKKGCKLDEKVRNMIQPFLSISYLGNNKTYFYPYESDNTMLFPILILGLFTLFIGFLGIPSNHEGVDLDILSKWLTPSINLLHQNTNTSLDLYEFSKDSIFSVSIASLGIFIAFFLYKPVYSSFQILDLINLFVKRGPKRIFSDKIKKGIYDWSSNRAYIDPFYTTFLTVGMRKLAELTHFFDRRIIDGIPNGVGLMIFFVAEGIKSLGGGRISSYLFFYLSHLSFFLLIYYFLNF</sequence>
<gene>
    <name type="primary">ndhF</name>
</gene>
<geneLocation type="chloroplast"/>
<comment type="function">
    <text evidence="1">NDH shuttles electrons from NAD(P)H:plastoquinone, via FMN and iron-sulfur (Fe-S) centers, to quinones in the photosynthetic chain and possibly in a chloroplast respiratory chain. The immediate electron acceptor for the enzyme in this species is believed to be plastoquinone. Couples the redox reaction to proton translocation, and thus conserves the redox energy in a proton gradient (By similarity).</text>
</comment>
<comment type="catalytic activity">
    <reaction>
        <text>a plastoquinone + NADH + (n+1) H(+)(in) = a plastoquinol + NAD(+) + n H(+)(out)</text>
        <dbReference type="Rhea" id="RHEA:42608"/>
        <dbReference type="Rhea" id="RHEA-COMP:9561"/>
        <dbReference type="Rhea" id="RHEA-COMP:9562"/>
        <dbReference type="ChEBI" id="CHEBI:15378"/>
        <dbReference type="ChEBI" id="CHEBI:17757"/>
        <dbReference type="ChEBI" id="CHEBI:57540"/>
        <dbReference type="ChEBI" id="CHEBI:57945"/>
        <dbReference type="ChEBI" id="CHEBI:62192"/>
    </reaction>
</comment>
<comment type="catalytic activity">
    <reaction>
        <text>a plastoquinone + NADPH + (n+1) H(+)(in) = a plastoquinol + NADP(+) + n H(+)(out)</text>
        <dbReference type="Rhea" id="RHEA:42612"/>
        <dbReference type="Rhea" id="RHEA-COMP:9561"/>
        <dbReference type="Rhea" id="RHEA-COMP:9562"/>
        <dbReference type="ChEBI" id="CHEBI:15378"/>
        <dbReference type="ChEBI" id="CHEBI:17757"/>
        <dbReference type="ChEBI" id="CHEBI:57783"/>
        <dbReference type="ChEBI" id="CHEBI:58349"/>
        <dbReference type="ChEBI" id="CHEBI:62192"/>
    </reaction>
</comment>
<comment type="subunit">
    <text evidence="1">NDH is composed of at least 16 different subunits, 5 of which are encoded in the nucleus.</text>
</comment>
<comment type="subcellular location">
    <subcellularLocation>
        <location evidence="1">Plastid</location>
        <location evidence="1">Chloroplast thylakoid membrane</location>
        <topology evidence="1">Multi-pass membrane protein</topology>
    </subcellularLocation>
</comment>
<comment type="similarity">
    <text evidence="3">Belongs to the complex I subunit 5 family.</text>
</comment>
<dbReference type="EC" id="7.1.1.-"/>
<dbReference type="EMBL" id="L39386">
    <property type="protein sequence ID" value="AAC37742.1"/>
    <property type="molecule type" value="Genomic_DNA"/>
</dbReference>
<dbReference type="PIR" id="T13043">
    <property type="entry name" value="T13043"/>
</dbReference>
<dbReference type="SMR" id="Q32126"/>
<dbReference type="GO" id="GO:0009535">
    <property type="term" value="C:chloroplast thylakoid membrane"/>
    <property type="evidence" value="ECO:0007669"/>
    <property type="project" value="UniProtKB-SubCell"/>
</dbReference>
<dbReference type="GO" id="GO:0008137">
    <property type="term" value="F:NADH dehydrogenase (ubiquinone) activity"/>
    <property type="evidence" value="ECO:0007669"/>
    <property type="project" value="InterPro"/>
</dbReference>
<dbReference type="GO" id="GO:0048038">
    <property type="term" value="F:quinone binding"/>
    <property type="evidence" value="ECO:0007669"/>
    <property type="project" value="UniProtKB-KW"/>
</dbReference>
<dbReference type="GO" id="GO:0042773">
    <property type="term" value="P:ATP synthesis coupled electron transport"/>
    <property type="evidence" value="ECO:0007669"/>
    <property type="project" value="InterPro"/>
</dbReference>
<dbReference type="GO" id="GO:0015990">
    <property type="term" value="P:electron transport coupled proton transport"/>
    <property type="evidence" value="ECO:0007669"/>
    <property type="project" value="TreeGrafter"/>
</dbReference>
<dbReference type="Gene3D" id="1.20.5.2700">
    <property type="match status" value="1"/>
</dbReference>
<dbReference type="InterPro" id="IPR002128">
    <property type="entry name" value="NADH_UbQ_OxRdtase_chlpt_su5_C"/>
</dbReference>
<dbReference type="InterPro" id="IPR018393">
    <property type="entry name" value="NADHpl_OxRdtase_5_subgr"/>
</dbReference>
<dbReference type="InterPro" id="IPR001750">
    <property type="entry name" value="ND/Mrp_TM"/>
</dbReference>
<dbReference type="InterPro" id="IPR003945">
    <property type="entry name" value="NU5C-like"/>
</dbReference>
<dbReference type="InterPro" id="IPR001516">
    <property type="entry name" value="Proton_antipo_N"/>
</dbReference>
<dbReference type="NCBIfam" id="TIGR01974">
    <property type="entry name" value="NDH_I_L"/>
    <property type="match status" value="1"/>
</dbReference>
<dbReference type="NCBIfam" id="NF005141">
    <property type="entry name" value="PRK06590.1"/>
    <property type="match status" value="1"/>
</dbReference>
<dbReference type="PANTHER" id="PTHR42829">
    <property type="entry name" value="NADH-UBIQUINONE OXIDOREDUCTASE CHAIN 5"/>
    <property type="match status" value="1"/>
</dbReference>
<dbReference type="PANTHER" id="PTHR42829:SF2">
    <property type="entry name" value="NADH-UBIQUINONE OXIDOREDUCTASE CHAIN 5"/>
    <property type="match status" value="1"/>
</dbReference>
<dbReference type="Pfam" id="PF01010">
    <property type="entry name" value="Proton_antipo_C"/>
    <property type="match status" value="1"/>
</dbReference>
<dbReference type="Pfam" id="PF00361">
    <property type="entry name" value="Proton_antipo_M"/>
    <property type="match status" value="1"/>
</dbReference>
<dbReference type="Pfam" id="PF00662">
    <property type="entry name" value="Proton_antipo_N"/>
    <property type="match status" value="1"/>
</dbReference>
<dbReference type="PRINTS" id="PR01434">
    <property type="entry name" value="NADHDHGNASE5"/>
</dbReference>
<dbReference type="PRINTS" id="PR01435">
    <property type="entry name" value="NPOXDRDTASE5"/>
</dbReference>